<feature type="chain" id="PRO_1000072083" description="NAD kinase">
    <location>
        <begin position="1"/>
        <end position="286"/>
    </location>
</feature>
<feature type="active site" description="Proton acceptor" evidence="1">
    <location>
        <position position="74"/>
    </location>
</feature>
<feature type="binding site" evidence="1">
    <location>
        <begin position="74"/>
        <end position="75"/>
    </location>
    <ligand>
        <name>NAD(+)</name>
        <dbReference type="ChEBI" id="CHEBI:57540"/>
    </ligand>
</feature>
<feature type="binding site" evidence="1">
    <location>
        <begin position="148"/>
        <end position="149"/>
    </location>
    <ligand>
        <name>NAD(+)</name>
        <dbReference type="ChEBI" id="CHEBI:57540"/>
    </ligand>
</feature>
<feature type="binding site" evidence="1">
    <location>
        <position position="178"/>
    </location>
    <ligand>
        <name>NAD(+)</name>
        <dbReference type="ChEBI" id="CHEBI:57540"/>
    </ligand>
</feature>
<feature type="binding site" evidence="1">
    <location>
        <position position="186"/>
    </location>
    <ligand>
        <name>NAD(+)</name>
        <dbReference type="ChEBI" id="CHEBI:57540"/>
    </ligand>
</feature>
<feature type="binding site" evidence="1">
    <location>
        <begin position="189"/>
        <end position="194"/>
    </location>
    <ligand>
        <name>NAD(+)</name>
        <dbReference type="ChEBI" id="CHEBI:57540"/>
    </ligand>
</feature>
<feature type="binding site" evidence="1">
    <location>
        <position position="244"/>
    </location>
    <ligand>
        <name>NAD(+)</name>
        <dbReference type="ChEBI" id="CHEBI:57540"/>
    </ligand>
</feature>
<keyword id="KW-0067">ATP-binding</keyword>
<keyword id="KW-0963">Cytoplasm</keyword>
<keyword id="KW-0418">Kinase</keyword>
<keyword id="KW-0520">NAD</keyword>
<keyword id="KW-0521">NADP</keyword>
<keyword id="KW-0547">Nucleotide-binding</keyword>
<keyword id="KW-0808">Transferase</keyword>
<name>NADK_CAMJ8</name>
<comment type="function">
    <text evidence="1">Involved in the regulation of the intracellular balance of NAD and NADP, and is a key enzyme in the biosynthesis of NADP. Catalyzes specifically the phosphorylation on 2'-hydroxyl of the adenosine moiety of NAD to yield NADP.</text>
</comment>
<comment type="catalytic activity">
    <reaction evidence="1">
        <text>NAD(+) + ATP = ADP + NADP(+) + H(+)</text>
        <dbReference type="Rhea" id="RHEA:18629"/>
        <dbReference type="ChEBI" id="CHEBI:15378"/>
        <dbReference type="ChEBI" id="CHEBI:30616"/>
        <dbReference type="ChEBI" id="CHEBI:57540"/>
        <dbReference type="ChEBI" id="CHEBI:58349"/>
        <dbReference type="ChEBI" id="CHEBI:456216"/>
        <dbReference type="EC" id="2.7.1.23"/>
    </reaction>
</comment>
<comment type="cofactor">
    <cofactor evidence="1">
        <name>a divalent metal cation</name>
        <dbReference type="ChEBI" id="CHEBI:60240"/>
    </cofactor>
</comment>
<comment type="subcellular location">
    <subcellularLocation>
        <location evidence="1">Cytoplasm</location>
    </subcellularLocation>
</comment>
<comment type="similarity">
    <text evidence="1">Belongs to the NAD kinase family.</text>
</comment>
<organism>
    <name type="scientific">Campylobacter jejuni subsp. jejuni serotype O:6 (strain 81116 / NCTC 11828)</name>
    <dbReference type="NCBI Taxonomy" id="407148"/>
    <lineage>
        <taxon>Bacteria</taxon>
        <taxon>Pseudomonadati</taxon>
        <taxon>Campylobacterota</taxon>
        <taxon>Epsilonproteobacteria</taxon>
        <taxon>Campylobacterales</taxon>
        <taxon>Campylobacteraceae</taxon>
        <taxon>Campylobacter</taxon>
    </lineage>
</organism>
<dbReference type="EC" id="2.7.1.23" evidence="1"/>
<dbReference type="EMBL" id="CP000814">
    <property type="protein sequence ID" value="ABV52199.1"/>
    <property type="molecule type" value="Genomic_DNA"/>
</dbReference>
<dbReference type="RefSeq" id="WP_002866499.1">
    <property type="nucleotide sequence ID" value="NC_009839.1"/>
</dbReference>
<dbReference type="SMR" id="A8FL62"/>
<dbReference type="KEGG" id="cju:C8J_0600"/>
<dbReference type="HOGENOM" id="CLU_008831_0_3_7"/>
<dbReference type="GO" id="GO:0005737">
    <property type="term" value="C:cytoplasm"/>
    <property type="evidence" value="ECO:0007669"/>
    <property type="project" value="UniProtKB-SubCell"/>
</dbReference>
<dbReference type="GO" id="GO:0005524">
    <property type="term" value="F:ATP binding"/>
    <property type="evidence" value="ECO:0007669"/>
    <property type="project" value="UniProtKB-KW"/>
</dbReference>
<dbReference type="GO" id="GO:0046872">
    <property type="term" value="F:metal ion binding"/>
    <property type="evidence" value="ECO:0007669"/>
    <property type="project" value="UniProtKB-UniRule"/>
</dbReference>
<dbReference type="GO" id="GO:0051287">
    <property type="term" value="F:NAD binding"/>
    <property type="evidence" value="ECO:0007669"/>
    <property type="project" value="UniProtKB-ARBA"/>
</dbReference>
<dbReference type="GO" id="GO:0003951">
    <property type="term" value="F:NAD+ kinase activity"/>
    <property type="evidence" value="ECO:0007669"/>
    <property type="project" value="UniProtKB-UniRule"/>
</dbReference>
<dbReference type="GO" id="GO:0019674">
    <property type="term" value="P:NAD metabolic process"/>
    <property type="evidence" value="ECO:0007669"/>
    <property type="project" value="InterPro"/>
</dbReference>
<dbReference type="GO" id="GO:0006741">
    <property type="term" value="P:NADP biosynthetic process"/>
    <property type="evidence" value="ECO:0007669"/>
    <property type="project" value="UniProtKB-UniRule"/>
</dbReference>
<dbReference type="Gene3D" id="3.40.50.10330">
    <property type="entry name" value="Probable inorganic polyphosphate/atp-NAD kinase, domain 1"/>
    <property type="match status" value="1"/>
</dbReference>
<dbReference type="Gene3D" id="2.60.200.30">
    <property type="entry name" value="Probable inorganic polyphosphate/atp-NAD kinase, domain 2"/>
    <property type="match status" value="1"/>
</dbReference>
<dbReference type="HAMAP" id="MF_00361">
    <property type="entry name" value="NAD_kinase"/>
    <property type="match status" value="1"/>
</dbReference>
<dbReference type="InterPro" id="IPR017438">
    <property type="entry name" value="ATP-NAD_kinase_N"/>
</dbReference>
<dbReference type="InterPro" id="IPR017437">
    <property type="entry name" value="ATP-NAD_kinase_PpnK-typ_C"/>
</dbReference>
<dbReference type="InterPro" id="IPR016064">
    <property type="entry name" value="NAD/diacylglycerol_kinase_sf"/>
</dbReference>
<dbReference type="InterPro" id="IPR002504">
    <property type="entry name" value="NADK"/>
</dbReference>
<dbReference type="NCBIfam" id="NF010679">
    <property type="entry name" value="PRK14077.1"/>
    <property type="match status" value="1"/>
</dbReference>
<dbReference type="PANTHER" id="PTHR20275">
    <property type="entry name" value="NAD KINASE"/>
    <property type="match status" value="1"/>
</dbReference>
<dbReference type="PANTHER" id="PTHR20275:SF0">
    <property type="entry name" value="NAD KINASE"/>
    <property type="match status" value="1"/>
</dbReference>
<dbReference type="Pfam" id="PF01513">
    <property type="entry name" value="NAD_kinase"/>
    <property type="match status" value="1"/>
</dbReference>
<dbReference type="Pfam" id="PF20143">
    <property type="entry name" value="NAD_kinase_C"/>
    <property type="match status" value="1"/>
</dbReference>
<dbReference type="SUPFAM" id="SSF111331">
    <property type="entry name" value="NAD kinase/diacylglycerol kinase-like"/>
    <property type="match status" value="1"/>
</dbReference>
<proteinExistence type="inferred from homology"/>
<protein>
    <recommendedName>
        <fullName evidence="1">NAD kinase</fullName>
        <ecNumber evidence="1">2.7.1.23</ecNumber>
    </recommendedName>
    <alternativeName>
        <fullName evidence="1">ATP-dependent NAD kinase</fullName>
    </alternativeName>
</protein>
<sequence length="286" mass="32356">MQNKIDYKNIKKIGLVTRPNVSLDKEILKLQSILSIYKVELVLFKESSEILDLPKYGLDDLFKISDFVISLGGDGTLISLCRKACEYDKAVLGIHAGHLGFLTDFKVDEAENFFQAFFQGEFRIEKPYLLSVFLEDKQGKILEKLAFNDVVISKNNQASMAHIEVFRKEKKFNEYFGDGLIVATPAGSTAYNLSANGPIVYTLAQAFILTPVCSHSLTQRPIVLPKGFEIEIMAKDCILCIDGQENYKMNDFKSIKVGLSDKNVALIHPKNRDYFQILKEKLHWGN</sequence>
<accession>A8FL62</accession>
<gene>
    <name evidence="1" type="primary">nadK</name>
    <name type="ordered locus">C8J_0600</name>
</gene>
<reference key="1">
    <citation type="journal article" date="2007" name="J. Bacteriol.">
        <title>The complete genome sequence of Campylobacter jejuni strain 81116 (NCTC11828).</title>
        <authorList>
            <person name="Pearson B.M."/>
            <person name="Gaskin D.J.H."/>
            <person name="Segers R.P.A.M."/>
            <person name="Wells J.M."/>
            <person name="Nuijten P.J.M."/>
            <person name="van Vliet A.H.M."/>
        </authorList>
    </citation>
    <scope>NUCLEOTIDE SEQUENCE [LARGE SCALE GENOMIC DNA]</scope>
    <source>
        <strain>81116 / NCTC 11828</strain>
    </source>
</reference>
<evidence type="ECO:0000255" key="1">
    <source>
        <dbReference type="HAMAP-Rule" id="MF_00361"/>
    </source>
</evidence>